<comment type="function">
    <text evidence="1">Forms part of the ribosomal stalk which helps the ribosome interact with GTP-bound translation factors.</text>
</comment>
<comment type="subunit">
    <text evidence="1">Part of the ribosomal stalk of the 50S ribosomal subunit. Interacts with L10 and the large rRNA to form the base of the stalk. L10 forms an elongated spine to which L12 dimers bind in a sequential fashion forming a multimeric L10(L12)X complex.</text>
</comment>
<comment type="PTM">
    <text evidence="1">One or more lysine residues are methylated.</text>
</comment>
<comment type="similarity">
    <text evidence="1">Belongs to the universal ribosomal protein uL11 family.</text>
</comment>
<name>RL11_FRATH</name>
<reference key="1">
    <citation type="submission" date="2006-03" db="EMBL/GenBank/DDBJ databases">
        <title>Complete genome sequence of Francisella tularensis LVS (Live Vaccine Strain).</title>
        <authorList>
            <person name="Chain P."/>
            <person name="Larimer F."/>
            <person name="Land M."/>
            <person name="Stilwagen S."/>
            <person name="Larsson P."/>
            <person name="Bearden S."/>
            <person name="Chu M."/>
            <person name="Oyston P."/>
            <person name="Forsman M."/>
            <person name="Andersson S."/>
            <person name="Lindler L."/>
            <person name="Titball R."/>
            <person name="Garcia E."/>
        </authorList>
    </citation>
    <scope>NUCLEOTIDE SEQUENCE [LARGE SCALE GENOMIC DNA]</scope>
    <source>
        <strain>LVS</strain>
    </source>
</reference>
<proteinExistence type="inferred from homology"/>
<evidence type="ECO:0000255" key="1">
    <source>
        <dbReference type="HAMAP-Rule" id="MF_00736"/>
    </source>
</evidence>
<evidence type="ECO:0000305" key="2"/>
<keyword id="KW-0488">Methylation</keyword>
<keyword id="KW-1185">Reference proteome</keyword>
<keyword id="KW-0687">Ribonucleoprotein</keyword>
<keyword id="KW-0689">Ribosomal protein</keyword>
<keyword id="KW-0694">RNA-binding</keyword>
<keyword id="KW-0699">rRNA-binding</keyword>
<dbReference type="EMBL" id="AM233362">
    <property type="protein sequence ID" value="CAJ80187.1"/>
    <property type="molecule type" value="Genomic_DNA"/>
</dbReference>
<dbReference type="RefSeq" id="WP_010032706.1">
    <property type="nucleotide sequence ID" value="NZ_CP009694.1"/>
</dbReference>
<dbReference type="SMR" id="Q2A1M3"/>
<dbReference type="KEGG" id="ftl:FTL_1748"/>
<dbReference type="Proteomes" id="UP000001944">
    <property type="component" value="Chromosome"/>
</dbReference>
<dbReference type="GO" id="GO:0022625">
    <property type="term" value="C:cytosolic large ribosomal subunit"/>
    <property type="evidence" value="ECO:0007669"/>
    <property type="project" value="TreeGrafter"/>
</dbReference>
<dbReference type="GO" id="GO:0070180">
    <property type="term" value="F:large ribosomal subunit rRNA binding"/>
    <property type="evidence" value="ECO:0007669"/>
    <property type="project" value="UniProtKB-UniRule"/>
</dbReference>
<dbReference type="GO" id="GO:0003735">
    <property type="term" value="F:structural constituent of ribosome"/>
    <property type="evidence" value="ECO:0007669"/>
    <property type="project" value="InterPro"/>
</dbReference>
<dbReference type="GO" id="GO:0006412">
    <property type="term" value="P:translation"/>
    <property type="evidence" value="ECO:0007669"/>
    <property type="project" value="UniProtKB-UniRule"/>
</dbReference>
<dbReference type="CDD" id="cd00349">
    <property type="entry name" value="Ribosomal_L11"/>
    <property type="match status" value="1"/>
</dbReference>
<dbReference type="FunFam" id="1.10.10.250:FF:000001">
    <property type="entry name" value="50S ribosomal protein L11"/>
    <property type="match status" value="1"/>
</dbReference>
<dbReference type="FunFam" id="3.30.1550.10:FF:000001">
    <property type="entry name" value="50S ribosomal protein L11"/>
    <property type="match status" value="1"/>
</dbReference>
<dbReference type="Gene3D" id="1.10.10.250">
    <property type="entry name" value="Ribosomal protein L11, C-terminal domain"/>
    <property type="match status" value="1"/>
</dbReference>
<dbReference type="Gene3D" id="3.30.1550.10">
    <property type="entry name" value="Ribosomal protein L11/L12, N-terminal domain"/>
    <property type="match status" value="1"/>
</dbReference>
<dbReference type="HAMAP" id="MF_00736">
    <property type="entry name" value="Ribosomal_uL11"/>
    <property type="match status" value="1"/>
</dbReference>
<dbReference type="InterPro" id="IPR000911">
    <property type="entry name" value="Ribosomal_uL11"/>
</dbReference>
<dbReference type="InterPro" id="IPR006519">
    <property type="entry name" value="Ribosomal_uL11_bac-typ"/>
</dbReference>
<dbReference type="InterPro" id="IPR020783">
    <property type="entry name" value="Ribosomal_uL11_C"/>
</dbReference>
<dbReference type="InterPro" id="IPR036769">
    <property type="entry name" value="Ribosomal_uL11_C_sf"/>
</dbReference>
<dbReference type="InterPro" id="IPR020785">
    <property type="entry name" value="Ribosomal_uL11_CS"/>
</dbReference>
<dbReference type="InterPro" id="IPR020784">
    <property type="entry name" value="Ribosomal_uL11_N"/>
</dbReference>
<dbReference type="InterPro" id="IPR036796">
    <property type="entry name" value="Ribosomal_uL11_N_sf"/>
</dbReference>
<dbReference type="NCBIfam" id="TIGR01632">
    <property type="entry name" value="L11_bact"/>
    <property type="match status" value="1"/>
</dbReference>
<dbReference type="PANTHER" id="PTHR11661">
    <property type="entry name" value="60S RIBOSOMAL PROTEIN L12"/>
    <property type="match status" value="1"/>
</dbReference>
<dbReference type="PANTHER" id="PTHR11661:SF1">
    <property type="entry name" value="LARGE RIBOSOMAL SUBUNIT PROTEIN UL11M"/>
    <property type="match status" value="1"/>
</dbReference>
<dbReference type="Pfam" id="PF00298">
    <property type="entry name" value="Ribosomal_L11"/>
    <property type="match status" value="1"/>
</dbReference>
<dbReference type="Pfam" id="PF03946">
    <property type="entry name" value="Ribosomal_L11_N"/>
    <property type="match status" value="1"/>
</dbReference>
<dbReference type="SMART" id="SM00649">
    <property type="entry name" value="RL11"/>
    <property type="match status" value="1"/>
</dbReference>
<dbReference type="SUPFAM" id="SSF54747">
    <property type="entry name" value="Ribosomal L11/L12e N-terminal domain"/>
    <property type="match status" value="1"/>
</dbReference>
<dbReference type="SUPFAM" id="SSF46906">
    <property type="entry name" value="Ribosomal protein L11, C-terminal domain"/>
    <property type="match status" value="1"/>
</dbReference>
<dbReference type="PROSITE" id="PS00359">
    <property type="entry name" value="RIBOSOMAL_L11"/>
    <property type="match status" value="1"/>
</dbReference>
<organism>
    <name type="scientific">Francisella tularensis subsp. holarctica (strain LVS)</name>
    <dbReference type="NCBI Taxonomy" id="376619"/>
    <lineage>
        <taxon>Bacteria</taxon>
        <taxon>Pseudomonadati</taxon>
        <taxon>Pseudomonadota</taxon>
        <taxon>Gammaproteobacteria</taxon>
        <taxon>Thiotrichales</taxon>
        <taxon>Francisellaceae</taxon>
        <taxon>Francisella</taxon>
    </lineage>
</organism>
<accession>Q2A1M3</accession>
<gene>
    <name evidence="1" type="primary">rplK</name>
    <name type="ordered locus">FTL_1748</name>
</gene>
<protein>
    <recommendedName>
        <fullName evidence="1">Large ribosomal subunit protein uL11</fullName>
    </recommendedName>
    <alternativeName>
        <fullName evidence="2">50S ribosomal protein L11</fullName>
    </alternativeName>
</protein>
<sequence length="144" mass="15270">MAKKKIEAIIKLQVAAGKANPSPPIGPALGQHGVNIMGFCKEFNAKTQGMEPGMPIPVEISVYSDRSFTFEMKTPPASYLIKKAINVKSGSSKPSKEFIGTITRAQLEEIAKVKDPDLTAADLDAAVRIIAGSARSMGVKVEGV</sequence>
<feature type="chain" id="PRO_0000258154" description="Large ribosomal subunit protein uL11">
    <location>
        <begin position="1"/>
        <end position="144"/>
    </location>
</feature>